<protein>
    <recommendedName>
        <fullName evidence="1">Co-chaperonin GroES</fullName>
    </recommendedName>
    <alternativeName>
        <fullName evidence="1">10 kDa chaperonin</fullName>
    </alternativeName>
    <alternativeName>
        <fullName evidence="1">Chaperonin-10</fullName>
        <shortName evidence="1">Cpn10</shortName>
    </alternativeName>
</protein>
<gene>
    <name evidence="1" type="primary">groES</name>
    <name evidence="1" type="synonym">groS</name>
    <name type="ordered locus">PG_0521</name>
</gene>
<evidence type="ECO:0000255" key="1">
    <source>
        <dbReference type="HAMAP-Rule" id="MF_00580"/>
    </source>
</evidence>
<evidence type="ECO:0000305" key="2"/>
<feature type="chain" id="PRO_0000174802" description="Co-chaperonin GroES">
    <location>
        <begin position="1"/>
        <end position="89"/>
    </location>
</feature>
<reference key="1">
    <citation type="journal article" date="1994" name="FEMS Microbiol. Lett.">
        <title>Heat shock protein 60 (GroEL) from Porphyromonas gingivalis: molecular cloning and sequence analysis of its gene and purification of the recombinant protein.</title>
        <authorList>
            <person name="Maeda H."/>
            <person name="Miyamoto M."/>
            <person name="Hongyou H."/>
            <person name="Kitanaka M."/>
            <person name="Nagai A."/>
            <person name="Kurihara H."/>
            <person name="Murayama Y."/>
        </authorList>
    </citation>
    <scope>NUCLEOTIDE SEQUENCE [GENOMIC DNA]</scope>
</reference>
<reference key="2">
    <citation type="journal article" date="1994" name="Biochim. Biophys. Acta">
        <title>Cloning and sequencing of the groESL homologue from Porphyromonas gingivalis.</title>
        <authorList>
            <person name="Hotokezaka H."/>
            <person name="Hayashida H."/>
            <person name="Ohara N."/>
            <person name="Nomaguchi H."/>
            <person name="Kobayashi K."/>
            <person name="Yamada T."/>
        </authorList>
    </citation>
    <scope>NUCLEOTIDE SEQUENCE [GENOMIC DNA]</scope>
    <source>
        <strain>381</strain>
    </source>
</reference>
<reference key="3">
    <citation type="journal article" date="2003" name="J. Bacteriol.">
        <title>Complete genome sequence of the oral pathogenic bacterium Porphyromonas gingivalis strain W83.</title>
        <authorList>
            <person name="Nelson K.E."/>
            <person name="Fleischmann R.D."/>
            <person name="DeBoy R.T."/>
            <person name="Paulsen I.T."/>
            <person name="Fouts D.E."/>
            <person name="Eisen J.A."/>
            <person name="Daugherty S.C."/>
            <person name="Dodson R.J."/>
            <person name="Durkin A.S."/>
            <person name="Gwinn M.L."/>
            <person name="Haft D.H."/>
            <person name="Kolonay J.F."/>
            <person name="Nelson W.C."/>
            <person name="Mason T.M."/>
            <person name="Tallon L."/>
            <person name="Gray J."/>
            <person name="Granger D."/>
            <person name="Tettelin H."/>
            <person name="Dong H."/>
            <person name="Galvin J.L."/>
            <person name="Duncan M.J."/>
            <person name="Dewhirst F.E."/>
            <person name="Fraser C.M."/>
        </authorList>
    </citation>
    <scope>NUCLEOTIDE SEQUENCE [LARGE SCALE GENOMIC DNA]</scope>
    <source>
        <strain>ATCC BAA-308 / W83</strain>
    </source>
</reference>
<name>CH10_PORGI</name>
<proteinExistence type="inferred from homology"/>
<dbReference type="EMBL" id="D17398">
    <property type="protein sequence ID" value="BAA04221.1"/>
    <property type="molecule type" value="Genomic_DNA"/>
</dbReference>
<dbReference type="EMBL" id="D17342">
    <property type="protein sequence ID" value="BAA04160.1"/>
    <property type="molecule type" value="Genomic_DNA"/>
</dbReference>
<dbReference type="EMBL" id="AE015924">
    <property type="protein sequence ID" value="AAQ65715.1"/>
    <property type="molecule type" value="Genomic_DNA"/>
</dbReference>
<dbReference type="RefSeq" id="WP_004585060.1">
    <property type="nucleotide sequence ID" value="NC_002950.2"/>
</dbReference>
<dbReference type="SMR" id="P42376"/>
<dbReference type="STRING" id="242619.PG_0521"/>
<dbReference type="EnsemblBacteria" id="AAQ65715">
    <property type="protein sequence ID" value="AAQ65715"/>
    <property type="gene ID" value="PG_0521"/>
</dbReference>
<dbReference type="KEGG" id="pgi:PG_0521"/>
<dbReference type="eggNOG" id="COG0234">
    <property type="taxonomic scope" value="Bacteria"/>
</dbReference>
<dbReference type="HOGENOM" id="CLU_132825_2_0_10"/>
<dbReference type="Proteomes" id="UP000000588">
    <property type="component" value="Chromosome"/>
</dbReference>
<dbReference type="GO" id="GO:0005737">
    <property type="term" value="C:cytoplasm"/>
    <property type="evidence" value="ECO:0007669"/>
    <property type="project" value="UniProtKB-SubCell"/>
</dbReference>
<dbReference type="GO" id="GO:0005524">
    <property type="term" value="F:ATP binding"/>
    <property type="evidence" value="ECO:0007669"/>
    <property type="project" value="InterPro"/>
</dbReference>
<dbReference type="GO" id="GO:0046872">
    <property type="term" value="F:metal ion binding"/>
    <property type="evidence" value="ECO:0007669"/>
    <property type="project" value="TreeGrafter"/>
</dbReference>
<dbReference type="GO" id="GO:0044183">
    <property type="term" value="F:protein folding chaperone"/>
    <property type="evidence" value="ECO:0007669"/>
    <property type="project" value="InterPro"/>
</dbReference>
<dbReference type="GO" id="GO:0051087">
    <property type="term" value="F:protein-folding chaperone binding"/>
    <property type="evidence" value="ECO:0007669"/>
    <property type="project" value="TreeGrafter"/>
</dbReference>
<dbReference type="GO" id="GO:0051082">
    <property type="term" value="F:unfolded protein binding"/>
    <property type="evidence" value="ECO:0007669"/>
    <property type="project" value="TreeGrafter"/>
</dbReference>
<dbReference type="GO" id="GO:0051085">
    <property type="term" value="P:chaperone cofactor-dependent protein refolding"/>
    <property type="evidence" value="ECO:0007669"/>
    <property type="project" value="TreeGrafter"/>
</dbReference>
<dbReference type="CDD" id="cd00320">
    <property type="entry name" value="cpn10"/>
    <property type="match status" value="1"/>
</dbReference>
<dbReference type="FunFam" id="2.30.33.40:FF:000004">
    <property type="entry name" value="10 kDa chaperonin"/>
    <property type="match status" value="1"/>
</dbReference>
<dbReference type="Gene3D" id="2.30.33.40">
    <property type="entry name" value="GroES chaperonin"/>
    <property type="match status" value="1"/>
</dbReference>
<dbReference type="HAMAP" id="MF_00580">
    <property type="entry name" value="CH10"/>
    <property type="match status" value="1"/>
</dbReference>
<dbReference type="InterPro" id="IPR020818">
    <property type="entry name" value="Chaperonin_GroES"/>
</dbReference>
<dbReference type="InterPro" id="IPR037124">
    <property type="entry name" value="Chaperonin_GroES_sf"/>
</dbReference>
<dbReference type="InterPro" id="IPR018369">
    <property type="entry name" value="Chaprnonin_Cpn10_CS"/>
</dbReference>
<dbReference type="InterPro" id="IPR011032">
    <property type="entry name" value="GroES-like_sf"/>
</dbReference>
<dbReference type="NCBIfam" id="NF001531">
    <property type="entry name" value="PRK00364.2-2"/>
    <property type="match status" value="1"/>
</dbReference>
<dbReference type="NCBIfam" id="NF001533">
    <property type="entry name" value="PRK00364.2-4"/>
    <property type="match status" value="1"/>
</dbReference>
<dbReference type="PANTHER" id="PTHR10772">
    <property type="entry name" value="10 KDA HEAT SHOCK PROTEIN"/>
    <property type="match status" value="1"/>
</dbReference>
<dbReference type="PANTHER" id="PTHR10772:SF58">
    <property type="entry name" value="CO-CHAPERONIN GROES"/>
    <property type="match status" value="1"/>
</dbReference>
<dbReference type="Pfam" id="PF00166">
    <property type="entry name" value="Cpn10"/>
    <property type="match status" value="1"/>
</dbReference>
<dbReference type="PRINTS" id="PR00297">
    <property type="entry name" value="CHAPERONIN10"/>
</dbReference>
<dbReference type="SMART" id="SM00883">
    <property type="entry name" value="Cpn10"/>
    <property type="match status" value="1"/>
</dbReference>
<dbReference type="SUPFAM" id="SSF50129">
    <property type="entry name" value="GroES-like"/>
    <property type="match status" value="1"/>
</dbReference>
<dbReference type="PROSITE" id="PS00681">
    <property type="entry name" value="CHAPERONINS_CPN10"/>
    <property type="match status" value="1"/>
</dbReference>
<keyword id="KW-0143">Chaperone</keyword>
<keyword id="KW-0963">Cytoplasm</keyword>
<keyword id="KW-1185">Reference proteome</keyword>
<organism>
    <name type="scientific">Porphyromonas gingivalis (strain ATCC BAA-308 / W83)</name>
    <dbReference type="NCBI Taxonomy" id="242619"/>
    <lineage>
        <taxon>Bacteria</taxon>
        <taxon>Pseudomonadati</taxon>
        <taxon>Bacteroidota</taxon>
        <taxon>Bacteroidia</taxon>
        <taxon>Bacteroidales</taxon>
        <taxon>Porphyromonadaceae</taxon>
        <taxon>Porphyromonas</taxon>
    </lineage>
</organism>
<sequence length="89" mass="9612">MNIKPLADRVLVKPAAAEEKTVSGIIIPDSAKEKPLKGEVIAVGNGTKDEEMVLKAGDTVLYGKYAGTEIELEGEKYIIMRQNDVLAII</sequence>
<accession>P42376</accession>
<comment type="function">
    <text evidence="1">Together with the chaperonin GroEL, plays an essential role in assisting protein folding. The GroEL-GroES system forms a nano-cage that allows encapsulation of the non-native substrate proteins and provides a physical environment optimized to promote and accelerate protein folding. GroES binds to the apical surface of the GroEL ring, thereby capping the opening of the GroEL channel.</text>
</comment>
<comment type="subunit">
    <text evidence="1">Heptamer of 7 subunits arranged in a ring. Interacts with the chaperonin GroEL.</text>
</comment>
<comment type="subcellular location">
    <subcellularLocation>
        <location evidence="1">Cytoplasm</location>
    </subcellularLocation>
</comment>
<comment type="similarity">
    <text evidence="1 2">Belongs to the GroES chaperonin family.</text>
</comment>